<evidence type="ECO:0000255" key="1">
    <source>
        <dbReference type="HAMAP-Rule" id="MF_01520"/>
    </source>
</evidence>
<proteinExistence type="inferred from homology"/>
<organism>
    <name type="scientific">Helicobacter pylori (strain G27)</name>
    <dbReference type="NCBI Taxonomy" id="563041"/>
    <lineage>
        <taxon>Bacteria</taxon>
        <taxon>Pseudomonadati</taxon>
        <taxon>Campylobacterota</taxon>
        <taxon>Epsilonproteobacteria</taxon>
        <taxon>Campylobacterales</taxon>
        <taxon>Helicobacteraceae</taxon>
        <taxon>Helicobacter</taxon>
    </lineage>
</organism>
<gene>
    <name evidence="1" type="primary">ispDF</name>
    <name type="ordered locus">HPG27_409</name>
</gene>
<keyword id="KW-0414">Isoprene biosynthesis</keyword>
<keyword id="KW-0456">Lyase</keyword>
<keyword id="KW-0479">Metal-binding</keyword>
<keyword id="KW-0511">Multifunctional enzyme</keyword>
<keyword id="KW-0548">Nucleotidyltransferase</keyword>
<keyword id="KW-1185">Reference proteome</keyword>
<keyword id="KW-0808">Transferase</keyword>
<protein>
    <recommendedName>
        <fullName evidence="1">Bifunctional enzyme IspD/IspF</fullName>
    </recommendedName>
    <domain>
        <recommendedName>
            <fullName evidence="1">2-C-methyl-D-erythritol 4-phosphate cytidylyltransferase</fullName>
            <ecNumber evidence="1">2.7.7.60</ecNumber>
        </recommendedName>
        <alternativeName>
            <fullName evidence="1">4-diphosphocytidyl-2C-methyl-D-erythritol synthase</fullName>
        </alternativeName>
        <alternativeName>
            <fullName evidence="1">MEP cytidylyltransferase</fullName>
            <shortName evidence="1">MCT</shortName>
        </alternativeName>
    </domain>
    <domain>
        <recommendedName>
            <fullName evidence="1">2-C-methyl-D-erythritol 2,4-cyclodiphosphate synthase</fullName>
            <shortName evidence="1">MECDP-synthase</shortName>
            <shortName evidence="1">MECPP-synthase</shortName>
            <shortName evidence="1">MECPS</shortName>
            <ecNumber evidence="1">4.6.1.12</ecNumber>
        </recommendedName>
    </domain>
</protein>
<dbReference type="EC" id="2.7.7.60" evidence="1"/>
<dbReference type="EC" id="4.6.1.12" evidence="1"/>
<dbReference type="EMBL" id="CP001173">
    <property type="protein sequence ID" value="ACI27173.1"/>
    <property type="molecule type" value="Genomic_DNA"/>
</dbReference>
<dbReference type="RefSeq" id="WP_000052984.1">
    <property type="nucleotide sequence ID" value="NC_011333.1"/>
</dbReference>
<dbReference type="SMR" id="B5Z6H4"/>
<dbReference type="KEGG" id="hpg:HPG27_409"/>
<dbReference type="HOGENOM" id="CLU_042800_2_6_7"/>
<dbReference type="UniPathway" id="UPA00056">
    <property type="reaction ID" value="UER00093"/>
</dbReference>
<dbReference type="UniPathway" id="UPA00056">
    <property type="reaction ID" value="UER00095"/>
</dbReference>
<dbReference type="Proteomes" id="UP000001735">
    <property type="component" value="Chromosome"/>
</dbReference>
<dbReference type="GO" id="GO:0008685">
    <property type="term" value="F:2-C-methyl-D-erythritol 2,4-cyclodiphosphate synthase activity"/>
    <property type="evidence" value="ECO:0007669"/>
    <property type="project" value="UniProtKB-UniRule"/>
</dbReference>
<dbReference type="GO" id="GO:0050518">
    <property type="term" value="F:2-C-methyl-D-erythritol 4-phosphate cytidylyltransferase activity"/>
    <property type="evidence" value="ECO:0007669"/>
    <property type="project" value="UniProtKB-UniRule"/>
</dbReference>
<dbReference type="GO" id="GO:0046872">
    <property type="term" value="F:metal ion binding"/>
    <property type="evidence" value="ECO:0007669"/>
    <property type="project" value="UniProtKB-KW"/>
</dbReference>
<dbReference type="GO" id="GO:0019288">
    <property type="term" value="P:isopentenyl diphosphate biosynthetic process, methylerythritol 4-phosphate pathway"/>
    <property type="evidence" value="ECO:0007669"/>
    <property type="project" value="UniProtKB-UniRule"/>
</dbReference>
<dbReference type="GO" id="GO:0016114">
    <property type="term" value="P:terpenoid biosynthetic process"/>
    <property type="evidence" value="ECO:0007669"/>
    <property type="project" value="InterPro"/>
</dbReference>
<dbReference type="CDD" id="cd02516">
    <property type="entry name" value="CDP-ME_synthetase"/>
    <property type="match status" value="1"/>
</dbReference>
<dbReference type="CDD" id="cd00554">
    <property type="entry name" value="MECDP_synthase"/>
    <property type="match status" value="1"/>
</dbReference>
<dbReference type="FunFam" id="3.30.1330.50:FF:000005">
    <property type="entry name" value="Bifunctional enzyme IspD/IspF"/>
    <property type="match status" value="1"/>
</dbReference>
<dbReference type="FunFam" id="3.90.550.10:FF:000259">
    <property type="entry name" value="Bifunctional enzyme IspD/IspF"/>
    <property type="match status" value="1"/>
</dbReference>
<dbReference type="Gene3D" id="3.30.1330.50">
    <property type="entry name" value="2-C-methyl-D-erythritol 2,4-cyclodiphosphate synthase"/>
    <property type="match status" value="1"/>
</dbReference>
<dbReference type="Gene3D" id="3.90.550.10">
    <property type="entry name" value="Spore Coat Polysaccharide Biosynthesis Protein SpsA, Chain A"/>
    <property type="match status" value="1"/>
</dbReference>
<dbReference type="HAMAP" id="MF_01520">
    <property type="entry name" value="IspDF"/>
    <property type="match status" value="1"/>
</dbReference>
<dbReference type="HAMAP" id="MF_00107">
    <property type="entry name" value="IspF"/>
    <property type="match status" value="1"/>
</dbReference>
<dbReference type="InterPro" id="IPR001228">
    <property type="entry name" value="IspD"/>
</dbReference>
<dbReference type="InterPro" id="IPR026596">
    <property type="entry name" value="IspD/F"/>
</dbReference>
<dbReference type="InterPro" id="IPR034683">
    <property type="entry name" value="IspD/TarI"/>
</dbReference>
<dbReference type="InterPro" id="IPR018294">
    <property type="entry name" value="ISPD_synthase_CS"/>
</dbReference>
<dbReference type="InterPro" id="IPR003526">
    <property type="entry name" value="MECDP_synthase"/>
</dbReference>
<dbReference type="InterPro" id="IPR020555">
    <property type="entry name" value="MECDP_synthase_CS"/>
</dbReference>
<dbReference type="InterPro" id="IPR036571">
    <property type="entry name" value="MECDP_synthase_sf"/>
</dbReference>
<dbReference type="InterPro" id="IPR029044">
    <property type="entry name" value="Nucleotide-diphossugar_trans"/>
</dbReference>
<dbReference type="NCBIfam" id="TIGR00453">
    <property type="entry name" value="ispD"/>
    <property type="match status" value="1"/>
</dbReference>
<dbReference type="NCBIfam" id="TIGR00151">
    <property type="entry name" value="ispF"/>
    <property type="match status" value="1"/>
</dbReference>
<dbReference type="NCBIfam" id="NF006899">
    <property type="entry name" value="PRK09382.1"/>
    <property type="match status" value="1"/>
</dbReference>
<dbReference type="PANTHER" id="PTHR43181">
    <property type="entry name" value="2-C-METHYL-D-ERYTHRITOL 2,4-CYCLODIPHOSPHATE SYNTHASE, CHLOROPLASTIC"/>
    <property type="match status" value="1"/>
</dbReference>
<dbReference type="PANTHER" id="PTHR43181:SF1">
    <property type="entry name" value="2-C-METHYL-D-ERYTHRITOL 2,4-CYCLODIPHOSPHATE SYNTHASE, CHLOROPLASTIC"/>
    <property type="match status" value="1"/>
</dbReference>
<dbReference type="Pfam" id="PF01128">
    <property type="entry name" value="IspD"/>
    <property type="match status" value="1"/>
</dbReference>
<dbReference type="Pfam" id="PF02542">
    <property type="entry name" value="YgbB"/>
    <property type="match status" value="1"/>
</dbReference>
<dbReference type="SUPFAM" id="SSF69765">
    <property type="entry name" value="IpsF-like"/>
    <property type="match status" value="1"/>
</dbReference>
<dbReference type="SUPFAM" id="SSF53448">
    <property type="entry name" value="Nucleotide-diphospho-sugar transferases"/>
    <property type="match status" value="1"/>
</dbReference>
<dbReference type="PROSITE" id="PS01295">
    <property type="entry name" value="ISPD"/>
    <property type="match status" value="1"/>
</dbReference>
<dbReference type="PROSITE" id="PS01350">
    <property type="entry name" value="ISPF"/>
    <property type="match status" value="1"/>
</dbReference>
<accession>B5Z6H4</accession>
<sequence length="406" mass="45487">MSLIRVNGEAFKLSLESLEEDPFETKETLETLVKQTSVVLLAAGESRRFSQTIKKQWLRSNHTPLWLSVYESFKKALDFKEILLVVSELDYIYIKRHYPEIKLVKGGASRQESVRNALKIIDSAYTLTSDAARGLANIEALKSLFLTLQQTNHYCIAPYLPCYDTAIYYNEALDREAIKLIQTPQLSHTKTLQSALNQGDFKDESSAILQAFPNRVSYIEGSKNLHKLTTSDDLKHFAFFFNPAKDTFIGMGFDTHAFIKDKPMVLGGVVLDCEFGLKAHSDGDALLHAVIDAVLGAIKGGDIGEWFPDNDPKYKNASSKELLKVVLDFSQSIGFELLEMGATIFSEIPKITPYKPAILESLSQLLGLEKSQISLKATTMEKMGFIGKQEGLLVQAHVSMRYKQKL</sequence>
<name>ISPDF_HELPG</name>
<comment type="function">
    <text evidence="1">Bifunctional enzyme that catalyzes the formation of 4-diphosphocytidyl-2-C-methyl-D-erythritol from CTP and 2-C-methyl-D-erythritol 4-phosphate (MEP) (IspD), and catalyzes the conversion of 4-diphosphocytidyl-2-C-methyl-D-erythritol 2-phosphate (CDP-ME2P) to 2-C-methyl-D-erythritol 2,4-cyclodiphosphate (ME-CPP) with a corresponding release of cytidine 5-monophosphate (CMP) (IspF).</text>
</comment>
<comment type="catalytic activity">
    <reaction evidence="1">
        <text>2-C-methyl-D-erythritol 4-phosphate + CTP + H(+) = 4-CDP-2-C-methyl-D-erythritol + diphosphate</text>
        <dbReference type="Rhea" id="RHEA:13429"/>
        <dbReference type="ChEBI" id="CHEBI:15378"/>
        <dbReference type="ChEBI" id="CHEBI:33019"/>
        <dbReference type="ChEBI" id="CHEBI:37563"/>
        <dbReference type="ChEBI" id="CHEBI:57823"/>
        <dbReference type="ChEBI" id="CHEBI:58262"/>
        <dbReference type="EC" id="2.7.7.60"/>
    </reaction>
</comment>
<comment type="catalytic activity">
    <reaction evidence="1">
        <text>4-CDP-2-C-methyl-D-erythritol 2-phosphate = 2-C-methyl-D-erythritol 2,4-cyclic diphosphate + CMP</text>
        <dbReference type="Rhea" id="RHEA:23864"/>
        <dbReference type="ChEBI" id="CHEBI:57919"/>
        <dbReference type="ChEBI" id="CHEBI:58483"/>
        <dbReference type="ChEBI" id="CHEBI:60377"/>
        <dbReference type="EC" id="4.6.1.12"/>
    </reaction>
</comment>
<comment type="cofactor">
    <cofactor evidence="1">
        <name>a divalent metal cation</name>
        <dbReference type="ChEBI" id="CHEBI:60240"/>
    </cofactor>
</comment>
<comment type="pathway">
    <text evidence="1">Isoprenoid biosynthesis; isopentenyl diphosphate biosynthesis via DXP pathway; isopentenyl diphosphate from 1-deoxy-D-xylulose 5-phosphate: step 2/6.</text>
</comment>
<comment type="pathway">
    <text evidence="1">Isoprenoid biosynthesis; isopentenyl diphosphate biosynthesis via DXP pathway; isopentenyl diphosphate from 1-deoxy-D-xylulose 5-phosphate: step 4/6.</text>
</comment>
<comment type="similarity">
    <text evidence="1">In the N-terminal section; belongs to the IspD/TarI cytidylyltransferase family. IspD subfamily.</text>
</comment>
<comment type="similarity">
    <text evidence="1">In the C-terminal section; belongs to the IspF family.</text>
</comment>
<reference key="1">
    <citation type="journal article" date="2009" name="J. Bacteriol.">
        <title>The complete genome sequence of Helicobacter pylori strain G27.</title>
        <authorList>
            <person name="Baltrus D.A."/>
            <person name="Amieva M.R."/>
            <person name="Covacci A."/>
            <person name="Lowe T.M."/>
            <person name="Merrell D.S."/>
            <person name="Ottemann K.M."/>
            <person name="Stein M."/>
            <person name="Salama N.R."/>
            <person name="Guillemin K."/>
        </authorList>
    </citation>
    <scope>NUCLEOTIDE SEQUENCE [LARGE SCALE GENOMIC DNA]</scope>
    <source>
        <strain>G27</strain>
    </source>
</reference>
<feature type="chain" id="PRO_1000146273" description="Bifunctional enzyme IspD/IspF">
    <location>
        <begin position="1"/>
        <end position="406"/>
    </location>
</feature>
<feature type="region of interest" description="2-C-methyl-D-erythritol 4-phosphate cytidylyltransferase" evidence="1">
    <location>
        <begin position="1"/>
        <end position="247"/>
    </location>
</feature>
<feature type="region of interest" description="2-C-methyl-D-erythritol 2,4-cyclodiphosphate synthase" evidence="1">
    <location>
        <begin position="248"/>
        <end position="406"/>
    </location>
</feature>
<feature type="binding site" evidence="1">
    <location>
        <begin position="254"/>
        <end position="256"/>
    </location>
    <ligand>
        <name>4-CDP-2-C-methyl-D-erythritol 2-phosphate</name>
        <dbReference type="ChEBI" id="CHEBI:57919"/>
    </ligand>
</feature>
<feature type="binding site" evidence="1">
    <location>
        <position position="254"/>
    </location>
    <ligand>
        <name>a divalent metal cation</name>
        <dbReference type="ChEBI" id="CHEBI:60240"/>
    </ligand>
</feature>
<feature type="binding site" evidence="1">
    <location>
        <position position="256"/>
    </location>
    <ligand>
        <name>a divalent metal cation</name>
        <dbReference type="ChEBI" id="CHEBI:60240"/>
    </ligand>
</feature>
<feature type="binding site" evidence="1">
    <location>
        <begin position="280"/>
        <end position="281"/>
    </location>
    <ligand>
        <name>4-CDP-2-C-methyl-D-erythritol 2-phosphate</name>
        <dbReference type="ChEBI" id="CHEBI:57919"/>
    </ligand>
</feature>
<feature type="binding site" evidence="1">
    <location>
        <position position="288"/>
    </location>
    <ligand>
        <name>a divalent metal cation</name>
        <dbReference type="ChEBI" id="CHEBI:60240"/>
    </ligand>
</feature>
<feature type="binding site" evidence="1">
    <location>
        <begin position="302"/>
        <end position="304"/>
    </location>
    <ligand>
        <name>4-CDP-2-C-methyl-D-erythritol 2-phosphate</name>
        <dbReference type="ChEBI" id="CHEBI:57919"/>
    </ligand>
</feature>
<feature type="binding site" evidence="1">
    <location>
        <begin position="307"/>
        <end position="311"/>
    </location>
    <ligand>
        <name>4-CDP-2-C-methyl-D-erythritol 2-phosphate</name>
        <dbReference type="ChEBI" id="CHEBI:57919"/>
    </ligand>
</feature>
<feature type="binding site" evidence="1">
    <location>
        <begin position="378"/>
        <end position="381"/>
    </location>
    <ligand>
        <name>4-CDP-2-C-methyl-D-erythritol 2-phosphate</name>
        <dbReference type="ChEBI" id="CHEBI:57919"/>
    </ligand>
</feature>
<feature type="binding site" evidence="1">
    <location>
        <position position="385"/>
    </location>
    <ligand>
        <name>4-CDP-2-C-methyl-D-erythritol 2-phosphate</name>
        <dbReference type="ChEBI" id="CHEBI:57919"/>
    </ligand>
</feature>
<feature type="binding site" evidence="1">
    <location>
        <position position="388"/>
    </location>
    <ligand>
        <name>4-CDP-2-C-methyl-D-erythritol 2-phosphate</name>
        <dbReference type="ChEBI" id="CHEBI:57919"/>
    </ligand>
</feature>
<feature type="site" description="Transition state stabilizer" evidence="1">
    <location>
        <position position="48"/>
    </location>
</feature>
<feature type="site" description="Transition state stabilizer" evidence="1">
    <location>
        <position position="55"/>
    </location>
</feature>
<feature type="site" description="Positions MEP for the nucleophilic attack" evidence="1">
    <location>
        <position position="175"/>
    </location>
</feature>
<feature type="site" description="Positions MEP for the nucleophilic attack" evidence="1">
    <location>
        <position position="227"/>
    </location>
</feature>
<feature type="site" description="Transition state stabilizer" evidence="1">
    <location>
        <position position="280"/>
    </location>
</feature>
<feature type="site" description="Transition state stabilizer" evidence="1">
    <location>
        <position position="379"/>
    </location>
</feature>